<comment type="function">
    <text evidence="1">Endonuclease that specifically degrades the RNA of RNA-DNA hybrids.</text>
</comment>
<comment type="catalytic activity">
    <reaction evidence="1">
        <text>Endonucleolytic cleavage to 5'-phosphomonoester.</text>
        <dbReference type="EC" id="3.1.26.4"/>
    </reaction>
</comment>
<comment type="cofactor">
    <cofactor evidence="1">
        <name>Mg(2+)</name>
        <dbReference type="ChEBI" id="CHEBI:18420"/>
    </cofactor>
    <text evidence="1">Binds 1 Mg(2+) ion per subunit. May bind a second metal ion at a regulatory site, or after substrate binding.</text>
</comment>
<comment type="subunit">
    <text evidence="1">Monomer.</text>
</comment>
<comment type="subcellular location">
    <subcellularLocation>
        <location evidence="1">Cytoplasm</location>
    </subcellularLocation>
</comment>
<comment type="similarity">
    <text evidence="1">Belongs to the RNase H family.</text>
</comment>
<evidence type="ECO:0000255" key="1">
    <source>
        <dbReference type="HAMAP-Rule" id="MF_00042"/>
    </source>
</evidence>
<evidence type="ECO:0000255" key="2">
    <source>
        <dbReference type="PROSITE-ProRule" id="PRU00408"/>
    </source>
</evidence>
<name>RNH_EHRCR</name>
<proteinExistence type="inferred from homology"/>
<organism>
    <name type="scientific">Ehrlichia chaffeensis (strain ATCC CRL-10679 / Arkansas)</name>
    <dbReference type="NCBI Taxonomy" id="205920"/>
    <lineage>
        <taxon>Bacteria</taxon>
        <taxon>Pseudomonadati</taxon>
        <taxon>Pseudomonadota</taxon>
        <taxon>Alphaproteobacteria</taxon>
        <taxon>Rickettsiales</taxon>
        <taxon>Anaplasmataceae</taxon>
        <taxon>Ehrlichia</taxon>
    </lineage>
</organism>
<keyword id="KW-0963">Cytoplasm</keyword>
<keyword id="KW-0255">Endonuclease</keyword>
<keyword id="KW-0378">Hydrolase</keyword>
<keyword id="KW-0460">Magnesium</keyword>
<keyword id="KW-0479">Metal-binding</keyword>
<keyword id="KW-0540">Nuclease</keyword>
<keyword id="KW-1185">Reference proteome</keyword>
<dbReference type="EC" id="3.1.26.4" evidence="1"/>
<dbReference type="EMBL" id="CP000236">
    <property type="protein sequence ID" value="ABD44596.1"/>
    <property type="molecule type" value="Genomic_DNA"/>
</dbReference>
<dbReference type="RefSeq" id="WP_006010281.1">
    <property type="nucleotide sequence ID" value="NC_007799.1"/>
</dbReference>
<dbReference type="SMR" id="Q2GHJ9"/>
<dbReference type="STRING" id="205920.ECH_0263"/>
<dbReference type="KEGG" id="ech:ECH_0263"/>
<dbReference type="eggNOG" id="COG0328">
    <property type="taxonomic scope" value="Bacteria"/>
</dbReference>
<dbReference type="HOGENOM" id="CLU_030894_6_0_5"/>
<dbReference type="OrthoDB" id="7845843at2"/>
<dbReference type="Proteomes" id="UP000008320">
    <property type="component" value="Chromosome"/>
</dbReference>
<dbReference type="GO" id="GO:0005737">
    <property type="term" value="C:cytoplasm"/>
    <property type="evidence" value="ECO:0007669"/>
    <property type="project" value="UniProtKB-SubCell"/>
</dbReference>
<dbReference type="GO" id="GO:0000287">
    <property type="term" value="F:magnesium ion binding"/>
    <property type="evidence" value="ECO:0007669"/>
    <property type="project" value="UniProtKB-UniRule"/>
</dbReference>
<dbReference type="GO" id="GO:0003676">
    <property type="term" value="F:nucleic acid binding"/>
    <property type="evidence" value="ECO:0007669"/>
    <property type="project" value="InterPro"/>
</dbReference>
<dbReference type="GO" id="GO:0004523">
    <property type="term" value="F:RNA-DNA hybrid ribonuclease activity"/>
    <property type="evidence" value="ECO:0007669"/>
    <property type="project" value="UniProtKB-UniRule"/>
</dbReference>
<dbReference type="GO" id="GO:0043137">
    <property type="term" value="P:DNA replication, removal of RNA primer"/>
    <property type="evidence" value="ECO:0007669"/>
    <property type="project" value="TreeGrafter"/>
</dbReference>
<dbReference type="CDD" id="cd09278">
    <property type="entry name" value="RNase_HI_prokaryote_like"/>
    <property type="match status" value="1"/>
</dbReference>
<dbReference type="FunFam" id="3.30.420.10:FF:000089">
    <property type="entry name" value="Ribonuclease H"/>
    <property type="match status" value="1"/>
</dbReference>
<dbReference type="Gene3D" id="3.30.420.10">
    <property type="entry name" value="Ribonuclease H-like superfamily/Ribonuclease H"/>
    <property type="match status" value="1"/>
</dbReference>
<dbReference type="HAMAP" id="MF_00042">
    <property type="entry name" value="RNase_H"/>
    <property type="match status" value="1"/>
</dbReference>
<dbReference type="InterPro" id="IPR050092">
    <property type="entry name" value="RNase_H"/>
</dbReference>
<dbReference type="InterPro" id="IPR012337">
    <property type="entry name" value="RNaseH-like_sf"/>
</dbReference>
<dbReference type="InterPro" id="IPR002156">
    <property type="entry name" value="RNaseH_domain"/>
</dbReference>
<dbReference type="InterPro" id="IPR036397">
    <property type="entry name" value="RNaseH_sf"/>
</dbReference>
<dbReference type="InterPro" id="IPR022892">
    <property type="entry name" value="RNaseHI"/>
</dbReference>
<dbReference type="NCBIfam" id="NF001236">
    <property type="entry name" value="PRK00203.1"/>
    <property type="match status" value="1"/>
</dbReference>
<dbReference type="PANTHER" id="PTHR10642">
    <property type="entry name" value="RIBONUCLEASE H1"/>
    <property type="match status" value="1"/>
</dbReference>
<dbReference type="PANTHER" id="PTHR10642:SF26">
    <property type="entry name" value="RIBONUCLEASE H1"/>
    <property type="match status" value="1"/>
</dbReference>
<dbReference type="Pfam" id="PF00075">
    <property type="entry name" value="RNase_H"/>
    <property type="match status" value="1"/>
</dbReference>
<dbReference type="SUPFAM" id="SSF53098">
    <property type="entry name" value="Ribonuclease H-like"/>
    <property type="match status" value="1"/>
</dbReference>
<dbReference type="PROSITE" id="PS50879">
    <property type="entry name" value="RNASE_H_1"/>
    <property type="match status" value="1"/>
</dbReference>
<sequence length="146" mass="16638">MKDELNKVVIYTDGACSGNPGPGGWAAVLLFDDNEKTICGNDSDTTNNRMELTAVIEALKLLKVAYNVDLYTDSVYVKDGITLWIRKWKVNGWKTANKMPVKNLELWLELDSLANFHKVTWYWVRAHVGDLYNQKADMLARSQIVR</sequence>
<gene>
    <name evidence="1" type="primary">rnhA</name>
    <name type="ordered locus">ECH_0263</name>
</gene>
<accession>Q2GHJ9</accession>
<protein>
    <recommendedName>
        <fullName evidence="1">Ribonuclease H</fullName>
        <shortName evidence="1">RNase H</shortName>
        <ecNumber evidence="1">3.1.26.4</ecNumber>
    </recommendedName>
</protein>
<reference key="1">
    <citation type="journal article" date="2006" name="PLoS Genet.">
        <title>Comparative genomics of emerging human ehrlichiosis agents.</title>
        <authorList>
            <person name="Dunning Hotopp J.C."/>
            <person name="Lin M."/>
            <person name="Madupu R."/>
            <person name="Crabtree J."/>
            <person name="Angiuoli S.V."/>
            <person name="Eisen J.A."/>
            <person name="Seshadri R."/>
            <person name="Ren Q."/>
            <person name="Wu M."/>
            <person name="Utterback T.R."/>
            <person name="Smith S."/>
            <person name="Lewis M."/>
            <person name="Khouri H."/>
            <person name="Zhang C."/>
            <person name="Niu H."/>
            <person name="Lin Q."/>
            <person name="Ohashi N."/>
            <person name="Zhi N."/>
            <person name="Nelson W.C."/>
            <person name="Brinkac L.M."/>
            <person name="Dodson R.J."/>
            <person name="Rosovitz M.J."/>
            <person name="Sundaram J.P."/>
            <person name="Daugherty S.C."/>
            <person name="Davidsen T."/>
            <person name="Durkin A.S."/>
            <person name="Gwinn M.L."/>
            <person name="Haft D.H."/>
            <person name="Selengut J.D."/>
            <person name="Sullivan S.A."/>
            <person name="Zafar N."/>
            <person name="Zhou L."/>
            <person name="Benahmed F."/>
            <person name="Forberger H."/>
            <person name="Halpin R."/>
            <person name="Mulligan S."/>
            <person name="Robinson J."/>
            <person name="White O."/>
            <person name="Rikihisa Y."/>
            <person name="Tettelin H."/>
        </authorList>
    </citation>
    <scope>NUCLEOTIDE SEQUENCE [LARGE SCALE GENOMIC DNA]</scope>
    <source>
        <strain>ATCC CRL-10679 / Arkansas</strain>
    </source>
</reference>
<feature type="chain" id="PRO_0000332595" description="Ribonuclease H">
    <location>
        <begin position="1"/>
        <end position="146"/>
    </location>
</feature>
<feature type="domain" description="RNase H type-1" evidence="2">
    <location>
        <begin position="4"/>
        <end position="145"/>
    </location>
</feature>
<feature type="binding site" evidence="1">
    <location>
        <position position="13"/>
    </location>
    <ligand>
        <name>Mg(2+)</name>
        <dbReference type="ChEBI" id="CHEBI:18420"/>
        <label>1</label>
    </ligand>
</feature>
<feature type="binding site" evidence="1">
    <location>
        <position position="13"/>
    </location>
    <ligand>
        <name>Mg(2+)</name>
        <dbReference type="ChEBI" id="CHEBI:18420"/>
        <label>2</label>
    </ligand>
</feature>
<feature type="binding site" evidence="1">
    <location>
        <position position="51"/>
    </location>
    <ligand>
        <name>Mg(2+)</name>
        <dbReference type="ChEBI" id="CHEBI:18420"/>
        <label>1</label>
    </ligand>
</feature>
<feature type="binding site" evidence="1">
    <location>
        <position position="73"/>
    </location>
    <ligand>
        <name>Mg(2+)</name>
        <dbReference type="ChEBI" id="CHEBI:18420"/>
        <label>1</label>
    </ligand>
</feature>
<feature type="binding site" evidence="1">
    <location>
        <position position="137"/>
    </location>
    <ligand>
        <name>Mg(2+)</name>
        <dbReference type="ChEBI" id="CHEBI:18420"/>
        <label>2</label>
    </ligand>
</feature>